<keyword id="KW-0004">4Fe-4S</keyword>
<keyword id="KW-0312">Gluconeogenesis</keyword>
<keyword id="KW-0408">Iron</keyword>
<keyword id="KW-0411">Iron-sulfur</keyword>
<keyword id="KW-0456">Lyase</keyword>
<keyword id="KW-0479">Metal-binding</keyword>
<keyword id="KW-1185">Reference proteome</keyword>
<evidence type="ECO:0000305" key="1"/>
<sequence length="455" mass="49242">MASFSILSIFKIGVGPSSSHTIGPMEAGARFCESLKGILEQVVRVQITLHGSLALTGKGHLSDEAVLIGLHGIYANELEVTTKKALLHEALENKVLKLANQHHIPFDYAKDLIFDNKPLTRHQNALILKAFNSKNEVLKEETYYSVGGGFVYTEKELDNLSEEDGNESIAYDFSSAKELLELCQKHQKSIAEIVRLRENALKNHPDATMVKIYHAMLECYDNGANSKERYLPGSLKVTRLAPSIKTRLEKHPTSGKDPLALIDYISLYARAIAEENASGGKVVTAPTNGACAVVPSVLLYAKNHLFENLSQKAINDFLLTSAAIGYLYKKNASLSGAEAGCQAEIGVASSMAAGGLAHLCQATTQQVLIASEIAMEHHLGLTCDPVGGLVQIPCIERNVLGAIKAISASKLALEDEYKPKVSLDEVIATMYATGKDMNEKYKETSLGGLAKTLKC</sequence>
<protein>
    <recommendedName>
        <fullName>L-serine dehydratase</fullName>
        <shortName>SDH</shortName>
        <ecNumber>4.3.1.17</ecNumber>
    </recommendedName>
    <alternativeName>
        <fullName>L-serine deaminase</fullName>
        <shortName>L-SD</shortName>
    </alternativeName>
</protein>
<reference key="1">
    <citation type="journal article" date="1997" name="Nature">
        <title>The complete genome sequence of the gastric pathogen Helicobacter pylori.</title>
        <authorList>
            <person name="Tomb J.-F."/>
            <person name="White O."/>
            <person name="Kerlavage A.R."/>
            <person name="Clayton R.A."/>
            <person name="Sutton G.G."/>
            <person name="Fleischmann R.D."/>
            <person name="Ketchum K.A."/>
            <person name="Klenk H.-P."/>
            <person name="Gill S.R."/>
            <person name="Dougherty B.A."/>
            <person name="Nelson K.E."/>
            <person name="Quackenbush J."/>
            <person name="Zhou L."/>
            <person name="Kirkness E.F."/>
            <person name="Peterson S.N."/>
            <person name="Loftus B.J."/>
            <person name="Richardson D.L."/>
            <person name="Dodson R.J."/>
            <person name="Khalak H.G."/>
            <person name="Glodek A."/>
            <person name="McKenney K."/>
            <person name="FitzGerald L.M."/>
            <person name="Lee N."/>
            <person name="Adams M.D."/>
            <person name="Hickey E.K."/>
            <person name="Berg D.E."/>
            <person name="Gocayne J.D."/>
            <person name="Utterback T.R."/>
            <person name="Peterson J.D."/>
            <person name="Kelley J.M."/>
            <person name="Cotton M.D."/>
            <person name="Weidman J.F."/>
            <person name="Fujii C."/>
            <person name="Bowman C."/>
            <person name="Watthey L."/>
            <person name="Wallin E."/>
            <person name="Hayes W.S."/>
            <person name="Borodovsky M."/>
            <person name="Karp P.D."/>
            <person name="Smith H.O."/>
            <person name="Fraser C.M."/>
            <person name="Venter J.C."/>
        </authorList>
    </citation>
    <scope>NUCLEOTIDE SEQUENCE [LARGE SCALE GENOMIC DNA]</scope>
    <source>
        <strain>ATCC 700392 / 26695</strain>
    </source>
</reference>
<dbReference type="EC" id="4.3.1.17"/>
<dbReference type="EMBL" id="AE000511">
    <property type="protein sequence ID" value="AAD07202.1"/>
    <property type="molecule type" value="Genomic_DNA"/>
</dbReference>
<dbReference type="PIR" id="D64536">
    <property type="entry name" value="D64536"/>
</dbReference>
<dbReference type="RefSeq" id="NP_206932.1">
    <property type="nucleotide sequence ID" value="NC_000915.1"/>
</dbReference>
<dbReference type="RefSeq" id="WP_000135967.1">
    <property type="nucleotide sequence ID" value="NC_018939.1"/>
</dbReference>
<dbReference type="SMR" id="P56072"/>
<dbReference type="DIP" id="DIP-3172N"/>
<dbReference type="FunCoup" id="P56072">
    <property type="interactions" value="218"/>
</dbReference>
<dbReference type="IntAct" id="P56072">
    <property type="interactions" value="8"/>
</dbReference>
<dbReference type="MINT" id="P56072"/>
<dbReference type="STRING" id="85962.HP_0132"/>
<dbReference type="PaxDb" id="85962-C694_00650"/>
<dbReference type="EnsemblBacteria" id="AAD07202">
    <property type="protein sequence ID" value="AAD07202"/>
    <property type="gene ID" value="HP_0132"/>
</dbReference>
<dbReference type="KEGG" id="heo:C694_00650"/>
<dbReference type="KEGG" id="hpy:HP_0132"/>
<dbReference type="PATRIC" id="fig|85962.47.peg.143"/>
<dbReference type="eggNOG" id="COG1760">
    <property type="taxonomic scope" value="Bacteria"/>
</dbReference>
<dbReference type="InParanoid" id="P56072"/>
<dbReference type="OrthoDB" id="9805537at2"/>
<dbReference type="PhylomeDB" id="P56072"/>
<dbReference type="UniPathway" id="UPA00138"/>
<dbReference type="Proteomes" id="UP000000429">
    <property type="component" value="Chromosome"/>
</dbReference>
<dbReference type="GO" id="GO:0051539">
    <property type="term" value="F:4 iron, 4 sulfur cluster binding"/>
    <property type="evidence" value="ECO:0007669"/>
    <property type="project" value="UniProtKB-KW"/>
</dbReference>
<dbReference type="GO" id="GO:0003941">
    <property type="term" value="F:L-serine ammonia-lyase activity"/>
    <property type="evidence" value="ECO:0000318"/>
    <property type="project" value="GO_Central"/>
</dbReference>
<dbReference type="GO" id="GO:0046872">
    <property type="term" value="F:metal ion binding"/>
    <property type="evidence" value="ECO:0007669"/>
    <property type="project" value="UniProtKB-KW"/>
</dbReference>
<dbReference type="GO" id="GO:0006094">
    <property type="term" value="P:gluconeogenesis"/>
    <property type="evidence" value="ECO:0007669"/>
    <property type="project" value="UniProtKB-UniPathway"/>
</dbReference>
<dbReference type="FunFam" id="3.30.1330.90:FF:000001">
    <property type="entry name" value="L-serine ammonia-lyase 1"/>
    <property type="match status" value="1"/>
</dbReference>
<dbReference type="Gene3D" id="3.30.1330.90">
    <property type="entry name" value="D-3-phosphoglycerate dehydrogenase, domain 3"/>
    <property type="match status" value="1"/>
</dbReference>
<dbReference type="InterPro" id="IPR029009">
    <property type="entry name" value="ASB_dom_sf"/>
</dbReference>
<dbReference type="InterPro" id="IPR051318">
    <property type="entry name" value="Fe-S_L-Ser"/>
</dbReference>
<dbReference type="InterPro" id="IPR004644">
    <property type="entry name" value="Fe-S_L-Ser_mono"/>
</dbReference>
<dbReference type="InterPro" id="IPR005130">
    <property type="entry name" value="Ser_deHydtase-like_asu"/>
</dbReference>
<dbReference type="InterPro" id="IPR005131">
    <property type="entry name" value="Ser_deHydtase_bsu"/>
</dbReference>
<dbReference type="NCBIfam" id="TIGR00720">
    <property type="entry name" value="sda_mono"/>
    <property type="match status" value="1"/>
</dbReference>
<dbReference type="PANTHER" id="PTHR30182">
    <property type="entry name" value="L-SERINE DEHYDRATASE"/>
    <property type="match status" value="1"/>
</dbReference>
<dbReference type="PANTHER" id="PTHR30182:SF1">
    <property type="entry name" value="L-SERINE DEHYDRATASE 1"/>
    <property type="match status" value="1"/>
</dbReference>
<dbReference type="Pfam" id="PF03313">
    <property type="entry name" value="SDH_alpha"/>
    <property type="match status" value="1"/>
</dbReference>
<dbReference type="Pfam" id="PF03315">
    <property type="entry name" value="SDH_beta"/>
    <property type="match status" value="1"/>
</dbReference>
<dbReference type="SUPFAM" id="SSF143548">
    <property type="entry name" value="Serine metabolism enzymes domain"/>
    <property type="match status" value="1"/>
</dbReference>
<name>SDHL_HELPY</name>
<proteinExistence type="inferred from homology"/>
<feature type="chain" id="PRO_0000171907" description="L-serine dehydratase">
    <location>
        <begin position="1"/>
        <end position="455"/>
    </location>
</feature>
<accession>P56072</accession>
<gene>
    <name type="primary">sdaA</name>
    <name type="ordered locus">HP_0132</name>
</gene>
<comment type="catalytic activity">
    <reaction>
        <text>L-serine = pyruvate + NH4(+)</text>
        <dbReference type="Rhea" id="RHEA:19169"/>
        <dbReference type="ChEBI" id="CHEBI:15361"/>
        <dbReference type="ChEBI" id="CHEBI:28938"/>
        <dbReference type="ChEBI" id="CHEBI:33384"/>
        <dbReference type="EC" id="4.3.1.17"/>
    </reaction>
</comment>
<comment type="cofactor">
    <cofactor evidence="1">
        <name>[4Fe-4S] cluster</name>
        <dbReference type="ChEBI" id="CHEBI:49883"/>
    </cofactor>
    <text evidence="1">Binds 1 [4Fe-4S] cluster.</text>
</comment>
<comment type="pathway">
    <text>Carbohydrate biosynthesis; gluconeogenesis.</text>
</comment>
<comment type="similarity">
    <text evidence="1">Belongs to the iron-sulfur dependent L-serine dehydratase family.</text>
</comment>
<organism>
    <name type="scientific">Helicobacter pylori (strain ATCC 700392 / 26695)</name>
    <name type="common">Campylobacter pylori</name>
    <dbReference type="NCBI Taxonomy" id="85962"/>
    <lineage>
        <taxon>Bacteria</taxon>
        <taxon>Pseudomonadati</taxon>
        <taxon>Campylobacterota</taxon>
        <taxon>Epsilonproteobacteria</taxon>
        <taxon>Campylobacterales</taxon>
        <taxon>Helicobacteraceae</taxon>
        <taxon>Helicobacter</taxon>
    </lineage>
</organism>